<name>ATPB2_DINSH</name>
<gene>
    <name evidence="1" type="primary">atpD2</name>
    <name type="ordered locus">Dshi_2934</name>
</gene>
<accession>A8LJR4</accession>
<protein>
    <recommendedName>
        <fullName evidence="1">ATP synthase subunit beta 2</fullName>
        <ecNumber evidence="1">7.1.2.2</ecNumber>
    </recommendedName>
    <alternativeName>
        <fullName evidence="1">ATP synthase F1 sector subunit beta 2</fullName>
    </alternativeName>
    <alternativeName>
        <fullName evidence="1">F-ATPase subunit beta 2</fullName>
    </alternativeName>
</protein>
<sequence length="474" mass="50497">MANAKGKVTQVIGAVVDVQFEDTLPEILNALNTENNGKKLVLEVAQHLGENTVRTIAMDATEGLVRGAEVTDTGGPITIPVGNATLGRIMNVIGEPIDEKGPVEASESRAIHQPAPEFSEQSTGSEILVTGIKVIDLLAPYSKGGKIGLFGGAGVGKTVLIMELINNIAKVHSGYSVFAGVGERTREGNDLYHEMIESNVIKPDNLSESQVALVYGQMNEPPGARARVALTGLTLAEQFRDQSGTDVLFFVDNIFRFTQAGSEVSALLGRIPSAVGYQPTLATDMGQMQERITSTKGGSITSIQAVYVPADDLTDPAPATTFAHLDATTVLSRAISELGIYPAVDPLDSSSRILDPGIVGEEHYQVARDVQGILQRYKSLQDIIAILGMDELSEEDKLTVARARKIQRFLSQPFDVAKVFTGSDGVQVPIEDTISSFKAVVAGEYDHLPEGAFYMVGGIDEVIAKAERMAADAA</sequence>
<feature type="chain" id="PRO_0000339527" description="ATP synthase subunit beta 2">
    <location>
        <begin position="1"/>
        <end position="474"/>
    </location>
</feature>
<feature type="binding site" evidence="1">
    <location>
        <begin position="151"/>
        <end position="158"/>
    </location>
    <ligand>
        <name>ATP</name>
        <dbReference type="ChEBI" id="CHEBI:30616"/>
    </ligand>
</feature>
<evidence type="ECO:0000255" key="1">
    <source>
        <dbReference type="HAMAP-Rule" id="MF_01347"/>
    </source>
</evidence>
<dbReference type="EC" id="7.1.2.2" evidence="1"/>
<dbReference type="EMBL" id="CP000830">
    <property type="protein sequence ID" value="ABV94667.1"/>
    <property type="molecule type" value="Genomic_DNA"/>
</dbReference>
<dbReference type="RefSeq" id="WP_012179595.1">
    <property type="nucleotide sequence ID" value="NC_009952.1"/>
</dbReference>
<dbReference type="SMR" id="A8LJR4"/>
<dbReference type="STRING" id="398580.Dshi_2934"/>
<dbReference type="KEGG" id="dsh:Dshi_2934"/>
<dbReference type="eggNOG" id="COG0055">
    <property type="taxonomic scope" value="Bacteria"/>
</dbReference>
<dbReference type="HOGENOM" id="CLU_022398_0_2_5"/>
<dbReference type="OrthoDB" id="9801639at2"/>
<dbReference type="Proteomes" id="UP000006833">
    <property type="component" value="Chromosome"/>
</dbReference>
<dbReference type="GO" id="GO:0005886">
    <property type="term" value="C:plasma membrane"/>
    <property type="evidence" value="ECO:0007669"/>
    <property type="project" value="UniProtKB-SubCell"/>
</dbReference>
<dbReference type="GO" id="GO:0045259">
    <property type="term" value="C:proton-transporting ATP synthase complex"/>
    <property type="evidence" value="ECO:0007669"/>
    <property type="project" value="UniProtKB-KW"/>
</dbReference>
<dbReference type="GO" id="GO:0005524">
    <property type="term" value="F:ATP binding"/>
    <property type="evidence" value="ECO:0007669"/>
    <property type="project" value="UniProtKB-UniRule"/>
</dbReference>
<dbReference type="GO" id="GO:0016887">
    <property type="term" value="F:ATP hydrolysis activity"/>
    <property type="evidence" value="ECO:0007669"/>
    <property type="project" value="InterPro"/>
</dbReference>
<dbReference type="GO" id="GO:0046933">
    <property type="term" value="F:proton-transporting ATP synthase activity, rotational mechanism"/>
    <property type="evidence" value="ECO:0007669"/>
    <property type="project" value="UniProtKB-UniRule"/>
</dbReference>
<dbReference type="CDD" id="cd18110">
    <property type="entry name" value="ATP-synt_F1_beta_C"/>
    <property type="match status" value="1"/>
</dbReference>
<dbReference type="CDD" id="cd18115">
    <property type="entry name" value="ATP-synt_F1_beta_N"/>
    <property type="match status" value="1"/>
</dbReference>
<dbReference type="CDD" id="cd01133">
    <property type="entry name" value="F1-ATPase_beta_CD"/>
    <property type="match status" value="1"/>
</dbReference>
<dbReference type="FunFam" id="1.10.1140.10:FF:000001">
    <property type="entry name" value="ATP synthase subunit beta"/>
    <property type="match status" value="1"/>
</dbReference>
<dbReference type="FunFam" id="2.40.10.170:FF:000004">
    <property type="entry name" value="ATP synthase subunit beta"/>
    <property type="match status" value="1"/>
</dbReference>
<dbReference type="FunFam" id="3.40.50.300:FF:000026">
    <property type="entry name" value="ATP synthase subunit beta"/>
    <property type="match status" value="1"/>
</dbReference>
<dbReference type="Gene3D" id="2.40.10.170">
    <property type="match status" value="1"/>
</dbReference>
<dbReference type="Gene3D" id="1.10.1140.10">
    <property type="entry name" value="Bovine Mitochondrial F1-atpase, Atp Synthase Beta Chain, Chain D, domain 3"/>
    <property type="match status" value="1"/>
</dbReference>
<dbReference type="Gene3D" id="3.40.50.300">
    <property type="entry name" value="P-loop containing nucleotide triphosphate hydrolases"/>
    <property type="match status" value="1"/>
</dbReference>
<dbReference type="HAMAP" id="MF_01347">
    <property type="entry name" value="ATP_synth_beta_bact"/>
    <property type="match status" value="1"/>
</dbReference>
<dbReference type="InterPro" id="IPR003593">
    <property type="entry name" value="AAA+_ATPase"/>
</dbReference>
<dbReference type="InterPro" id="IPR055190">
    <property type="entry name" value="ATP-synt_VA_C"/>
</dbReference>
<dbReference type="InterPro" id="IPR005722">
    <property type="entry name" value="ATP_synth_F1_bsu"/>
</dbReference>
<dbReference type="InterPro" id="IPR020003">
    <property type="entry name" value="ATPase_a/bsu_AS"/>
</dbReference>
<dbReference type="InterPro" id="IPR050053">
    <property type="entry name" value="ATPase_alpha/beta_chains"/>
</dbReference>
<dbReference type="InterPro" id="IPR004100">
    <property type="entry name" value="ATPase_F1/V1/A1_a/bsu_N"/>
</dbReference>
<dbReference type="InterPro" id="IPR036121">
    <property type="entry name" value="ATPase_F1/V1/A1_a/bsu_N_sf"/>
</dbReference>
<dbReference type="InterPro" id="IPR000194">
    <property type="entry name" value="ATPase_F1/V1/A1_a/bsu_nucl-bd"/>
</dbReference>
<dbReference type="InterPro" id="IPR024034">
    <property type="entry name" value="ATPase_F1/V1_b/a_C"/>
</dbReference>
<dbReference type="InterPro" id="IPR027417">
    <property type="entry name" value="P-loop_NTPase"/>
</dbReference>
<dbReference type="NCBIfam" id="TIGR01039">
    <property type="entry name" value="atpD"/>
    <property type="match status" value="1"/>
</dbReference>
<dbReference type="PANTHER" id="PTHR15184">
    <property type="entry name" value="ATP SYNTHASE"/>
    <property type="match status" value="1"/>
</dbReference>
<dbReference type="PANTHER" id="PTHR15184:SF71">
    <property type="entry name" value="ATP SYNTHASE SUBUNIT BETA, MITOCHONDRIAL"/>
    <property type="match status" value="1"/>
</dbReference>
<dbReference type="Pfam" id="PF00006">
    <property type="entry name" value="ATP-synt_ab"/>
    <property type="match status" value="1"/>
</dbReference>
<dbReference type="Pfam" id="PF02874">
    <property type="entry name" value="ATP-synt_ab_N"/>
    <property type="match status" value="1"/>
</dbReference>
<dbReference type="Pfam" id="PF22919">
    <property type="entry name" value="ATP-synt_VA_C"/>
    <property type="match status" value="1"/>
</dbReference>
<dbReference type="PIRSF" id="PIRSF039072">
    <property type="entry name" value="ATPase_subunit_beta"/>
    <property type="match status" value="1"/>
</dbReference>
<dbReference type="SMART" id="SM00382">
    <property type="entry name" value="AAA"/>
    <property type="match status" value="1"/>
</dbReference>
<dbReference type="SUPFAM" id="SSF47917">
    <property type="entry name" value="C-terminal domain of alpha and beta subunits of F1 ATP synthase"/>
    <property type="match status" value="1"/>
</dbReference>
<dbReference type="SUPFAM" id="SSF50615">
    <property type="entry name" value="N-terminal domain of alpha and beta subunits of F1 ATP synthase"/>
    <property type="match status" value="1"/>
</dbReference>
<dbReference type="SUPFAM" id="SSF52540">
    <property type="entry name" value="P-loop containing nucleoside triphosphate hydrolases"/>
    <property type="match status" value="1"/>
</dbReference>
<dbReference type="PROSITE" id="PS00152">
    <property type="entry name" value="ATPASE_ALPHA_BETA"/>
    <property type="match status" value="1"/>
</dbReference>
<keyword id="KW-0066">ATP synthesis</keyword>
<keyword id="KW-0067">ATP-binding</keyword>
<keyword id="KW-0997">Cell inner membrane</keyword>
<keyword id="KW-1003">Cell membrane</keyword>
<keyword id="KW-0139">CF(1)</keyword>
<keyword id="KW-0375">Hydrogen ion transport</keyword>
<keyword id="KW-0406">Ion transport</keyword>
<keyword id="KW-0472">Membrane</keyword>
<keyword id="KW-0547">Nucleotide-binding</keyword>
<keyword id="KW-1185">Reference proteome</keyword>
<keyword id="KW-1278">Translocase</keyword>
<keyword id="KW-0813">Transport</keyword>
<comment type="function">
    <text evidence="1">Produces ATP from ADP in the presence of a proton gradient across the membrane. The catalytic sites are hosted primarily by the beta subunits.</text>
</comment>
<comment type="catalytic activity">
    <reaction evidence="1">
        <text>ATP + H2O + 4 H(+)(in) = ADP + phosphate + 5 H(+)(out)</text>
        <dbReference type="Rhea" id="RHEA:57720"/>
        <dbReference type="ChEBI" id="CHEBI:15377"/>
        <dbReference type="ChEBI" id="CHEBI:15378"/>
        <dbReference type="ChEBI" id="CHEBI:30616"/>
        <dbReference type="ChEBI" id="CHEBI:43474"/>
        <dbReference type="ChEBI" id="CHEBI:456216"/>
        <dbReference type="EC" id="7.1.2.2"/>
    </reaction>
</comment>
<comment type="subunit">
    <text evidence="1">F-type ATPases have 2 components, CF(1) - the catalytic core - and CF(0) - the membrane proton channel. CF(1) has five subunits: alpha(3), beta(3), gamma(1), delta(1), epsilon(1). CF(0) has four main subunits: a(1), b(1), b'(1) and c(9-12).</text>
</comment>
<comment type="subcellular location">
    <subcellularLocation>
        <location evidence="1">Cell inner membrane</location>
        <topology evidence="1">Peripheral membrane protein</topology>
    </subcellularLocation>
</comment>
<comment type="similarity">
    <text evidence="1">Belongs to the ATPase alpha/beta chains family.</text>
</comment>
<organism>
    <name type="scientific">Dinoroseobacter shibae (strain DSM 16493 / NCIMB 14021 / DFL 12)</name>
    <dbReference type="NCBI Taxonomy" id="398580"/>
    <lineage>
        <taxon>Bacteria</taxon>
        <taxon>Pseudomonadati</taxon>
        <taxon>Pseudomonadota</taxon>
        <taxon>Alphaproteobacteria</taxon>
        <taxon>Rhodobacterales</taxon>
        <taxon>Roseobacteraceae</taxon>
        <taxon>Dinoroseobacter</taxon>
    </lineage>
</organism>
<proteinExistence type="inferred from homology"/>
<reference key="1">
    <citation type="journal article" date="2010" name="ISME J.">
        <title>The complete genome sequence of the algal symbiont Dinoroseobacter shibae: a hitchhiker's guide to life in the sea.</title>
        <authorList>
            <person name="Wagner-Dobler I."/>
            <person name="Ballhausen B."/>
            <person name="Berger M."/>
            <person name="Brinkhoff T."/>
            <person name="Buchholz I."/>
            <person name="Bunk B."/>
            <person name="Cypionka H."/>
            <person name="Daniel R."/>
            <person name="Drepper T."/>
            <person name="Gerdts G."/>
            <person name="Hahnke S."/>
            <person name="Han C."/>
            <person name="Jahn D."/>
            <person name="Kalhoefer D."/>
            <person name="Kiss H."/>
            <person name="Klenk H.P."/>
            <person name="Kyrpides N."/>
            <person name="Liebl W."/>
            <person name="Liesegang H."/>
            <person name="Meincke L."/>
            <person name="Pati A."/>
            <person name="Petersen J."/>
            <person name="Piekarski T."/>
            <person name="Pommerenke C."/>
            <person name="Pradella S."/>
            <person name="Pukall R."/>
            <person name="Rabus R."/>
            <person name="Stackebrandt E."/>
            <person name="Thole S."/>
            <person name="Thompson L."/>
            <person name="Tielen P."/>
            <person name="Tomasch J."/>
            <person name="von Jan M."/>
            <person name="Wanphrut N."/>
            <person name="Wichels A."/>
            <person name="Zech H."/>
            <person name="Simon M."/>
        </authorList>
    </citation>
    <scope>NUCLEOTIDE SEQUENCE [LARGE SCALE GENOMIC DNA]</scope>
    <source>
        <strain>DSM 16493 / NCIMB 14021 / DFL 12</strain>
    </source>
</reference>